<evidence type="ECO:0000255" key="1"/>
<evidence type="ECO:0000269" key="2">
    <source>
    </source>
</evidence>
<evidence type="ECO:0000269" key="3">
    <source>
    </source>
</evidence>
<evidence type="ECO:0000305" key="4"/>
<protein>
    <recommendedName>
        <fullName>Oligopeptide transporter 2</fullName>
    </recommendedName>
</protein>
<feature type="chain" id="PRO_0000262733" description="Oligopeptide transporter 2">
    <location>
        <begin position="1"/>
        <end position="877"/>
    </location>
</feature>
<feature type="topological domain" description="Cytoplasmic" evidence="1">
    <location>
        <begin position="1"/>
        <end position="167"/>
    </location>
</feature>
<feature type="transmembrane region" description="Helical" evidence="1">
    <location>
        <begin position="168"/>
        <end position="188"/>
    </location>
</feature>
<feature type="topological domain" description="Extracellular" evidence="1">
    <location>
        <position position="189"/>
    </location>
</feature>
<feature type="transmembrane region" description="Helical" evidence="1">
    <location>
        <begin position="190"/>
        <end position="210"/>
    </location>
</feature>
<feature type="topological domain" description="Cytoplasmic" evidence="1">
    <location>
        <begin position="211"/>
        <end position="240"/>
    </location>
</feature>
<feature type="transmembrane region" description="Helical" evidence="1">
    <location>
        <begin position="241"/>
        <end position="261"/>
    </location>
</feature>
<feature type="topological domain" description="Extracellular" evidence="1">
    <location>
        <begin position="262"/>
        <end position="272"/>
    </location>
</feature>
<feature type="transmembrane region" description="Helical" evidence="1">
    <location>
        <begin position="273"/>
        <end position="293"/>
    </location>
</feature>
<feature type="topological domain" description="Cytoplasmic" evidence="1">
    <location>
        <begin position="294"/>
        <end position="334"/>
    </location>
</feature>
<feature type="transmembrane region" description="Helical" evidence="1">
    <location>
        <begin position="335"/>
        <end position="355"/>
    </location>
</feature>
<feature type="topological domain" description="Extracellular" evidence="1">
    <location>
        <begin position="356"/>
        <end position="374"/>
    </location>
</feature>
<feature type="transmembrane region" description="Helical" evidence="1">
    <location>
        <begin position="375"/>
        <end position="395"/>
    </location>
</feature>
<feature type="topological domain" description="Cytoplasmic" evidence="1">
    <location>
        <begin position="396"/>
        <end position="404"/>
    </location>
</feature>
<feature type="transmembrane region" description="Helical" evidence="1">
    <location>
        <begin position="405"/>
        <end position="425"/>
    </location>
</feature>
<feature type="topological domain" description="Extracellular" evidence="1">
    <location>
        <begin position="426"/>
        <end position="480"/>
    </location>
</feature>
<feature type="transmembrane region" description="Helical" evidence="1">
    <location>
        <begin position="481"/>
        <end position="501"/>
    </location>
</feature>
<feature type="topological domain" description="Cytoplasmic" evidence="1">
    <location>
        <begin position="502"/>
        <end position="553"/>
    </location>
</feature>
<feature type="transmembrane region" description="Helical" evidence="1">
    <location>
        <begin position="554"/>
        <end position="574"/>
    </location>
</feature>
<feature type="topological domain" description="Extracellular" evidence="1">
    <location>
        <begin position="575"/>
        <end position="582"/>
    </location>
</feature>
<feature type="transmembrane region" description="Helical" evidence="1">
    <location>
        <begin position="583"/>
        <end position="603"/>
    </location>
</feature>
<feature type="topological domain" description="Cytoplasmic" evidence="1">
    <location>
        <begin position="604"/>
        <end position="614"/>
    </location>
</feature>
<feature type="transmembrane region" description="Helical" evidence="1">
    <location>
        <begin position="615"/>
        <end position="635"/>
    </location>
</feature>
<feature type="topological domain" description="Extracellular" evidence="1">
    <location>
        <begin position="636"/>
        <end position="671"/>
    </location>
</feature>
<feature type="transmembrane region" description="Helical" evidence="1">
    <location>
        <begin position="672"/>
        <end position="692"/>
    </location>
</feature>
<feature type="topological domain" description="Cytoplasmic" evidence="1">
    <location>
        <begin position="693"/>
        <end position="730"/>
    </location>
</feature>
<feature type="transmembrane region" description="Helical" evidence="1">
    <location>
        <begin position="731"/>
        <end position="751"/>
    </location>
</feature>
<feature type="topological domain" description="Extracellular" evidence="1">
    <location>
        <begin position="752"/>
        <end position="766"/>
    </location>
</feature>
<feature type="transmembrane region" description="Helical" evidence="1">
    <location>
        <begin position="767"/>
        <end position="789"/>
    </location>
</feature>
<feature type="topological domain" description="Cytoplasmic" evidence="1">
    <location>
        <begin position="790"/>
        <end position="811"/>
    </location>
</feature>
<feature type="transmembrane region" description="Helical" evidence="1">
    <location>
        <begin position="812"/>
        <end position="832"/>
    </location>
</feature>
<feature type="topological domain" description="Extracellular" evidence="1">
    <location>
        <begin position="833"/>
        <end position="877"/>
    </location>
</feature>
<feature type="glycosylation site" description="N-linked (GlcNAc...) asparagine" evidence="1">
    <location>
        <position position="374"/>
    </location>
</feature>
<feature type="glycosylation site" description="N-linked (GlcNAc...) asparagine" evidence="1">
    <location>
        <position position="860"/>
    </location>
</feature>
<comment type="function">
    <text evidence="2 3">Transports tetra- and pentapeptides. Does not transport glutathione.</text>
</comment>
<comment type="subcellular location">
    <subcellularLocation>
        <location>Membrane</location>
        <topology>Multi-pass membrane protein</topology>
    </subcellularLocation>
</comment>
<comment type="similarity">
    <text evidence="4">Belongs to the oligopeptide OPT transporter family.</text>
</comment>
<organism>
    <name type="scientific">Saccharomyces cerevisiae (strain ATCC 204508 / S288c)</name>
    <name type="common">Baker's yeast</name>
    <dbReference type="NCBI Taxonomy" id="559292"/>
    <lineage>
        <taxon>Eukaryota</taxon>
        <taxon>Fungi</taxon>
        <taxon>Dikarya</taxon>
        <taxon>Ascomycota</taxon>
        <taxon>Saccharomycotina</taxon>
        <taxon>Saccharomycetes</taxon>
        <taxon>Saccharomycetales</taxon>
        <taxon>Saccharomycetaceae</taxon>
        <taxon>Saccharomyces</taxon>
    </lineage>
</organism>
<proteinExistence type="evidence at protein level"/>
<name>OPT2_YEAST</name>
<accession>Q06593</accession>
<accession>D6W4J4</accession>
<gene>
    <name type="primary">OPT2</name>
    <name type="ordered locus">YPR194C</name>
    <name type="ORF">P9677.13</name>
</gene>
<reference key="1">
    <citation type="journal article" date="1997" name="Nature">
        <title>The nucleotide sequence of Saccharomyces cerevisiae chromosome XVI.</title>
        <authorList>
            <person name="Bussey H."/>
            <person name="Storms R.K."/>
            <person name="Ahmed A."/>
            <person name="Albermann K."/>
            <person name="Allen E."/>
            <person name="Ansorge W."/>
            <person name="Araujo R."/>
            <person name="Aparicio A."/>
            <person name="Barrell B.G."/>
            <person name="Badcock K."/>
            <person name="Benes V."/>
            <person name="Botstein D."/>
            <person name="Bowman S."/>
            <person name="Brueckner M."/>
            <person name="Carpenter J."/>
            <person name="Cherry J.M."/>
            <person name="Chung E."/>
            <person name="Churcher C.M."/>
            <person name="Coster F."/>
            <person name="Davis K."/>
            <person name="Davis R.W."/>
            <person name="Dietrich F.S."/>
            <person name="Delius H."/>
            <person name="DiPaolo T."/>
            <person name="Dubois E."/>
            <person name="Duesterhoeft A."/>
            <person name="Duncan M."/>
            <person name="Floeth M."/>
            <person name="Fortin N."/>
            <person name="Friesen J.D."/>
            <person name="Fritz C."/>
            <person name="Goffeau A."/>
            <person name="Hall J."/>
            <person name="Hebling U."/>
            <person name="Heumann K."/>
            <person name="Hilbert H."/>
            <person name="Hillier L.W."/>
            <person name="Hunicke-Smith S."/>
            <person name="Hyman R.W."/>
            <person name="Johnston M."/>
            <person name="Kalman S."/>
            <person name="Kleine K."/>
            <person name="Komp C."/>
            <person name="Kurdi O."/>
            <person name="Lashkari D."/>
            <person name="Lew H."/>
            <person name="Lin A."/>
            <person name="Lin D."/>
            <person name="Louis E.J."/>
            <person name="Marathe R."/>
            <person name="Messenguy F."/>
            <person name="Mewes H.-W."/>
            <person name="Mirtipati S."/>
            <person name="Moestl D."/>
            <person name="Mueller-Auer S."/>
            <person name="Namath A."/>
            <person name="Nentwich U."/>
            <person name="Oefner P."/>
            <person name="Pearson D."/>
            <person name="Petel F.X."/>
            <person name="Pohl T.M."/>
            <person name="Purnelle B."/>
            <person name="Rajandream M.A."/>
            <person name="Rechmann S."/>
            <person name="Rieger M."/>
            <person name="Riles L."/>
            <person name="Roberts D."/>
            <person name="Schaefer M."/>
            <person name="Scharfe M."/>
            <person name="Scherens B."/>
            <person name="Schramm S."/>
            <person name="Schroeder M."/>
            <person name="Sdicu A.-M."/>
            <person name="Tettelin H."/>
            <person name="Urrestarazu L.A."/>
            <person name="Ushinsky S."/>
            <person name="Vierendeels F."/>
            <person name="Vissers S."/>
            <person name="Voss H."/>
            <person name="Walsh S.V."/>
            <person name="Wambutt R."/>
            <person name="Wang Y."/>
            <person name="Wedler E."/>
            <person name="Wedler H."/>
            <person name="Winnett E."/>
            <person name="Zhong W.-W."/>
            <person name="Zollner A."/>
            <person name="Vo D.H."/>
            <person name="Hani J."/>
        </authorList>
    </citation>
    <scope>NUCLEOTIDE SEQUENCE [LARGE SCALE GENOMIC DNA]</scope>
    <source>
        <strain>ATCC 204508 / S288c</strain>
    </source>
</reference>
<reference key="2">
    <citation type="journal article" date="2014" name="G3 (Bethesda)">
        <title>The reference genome sequence of Saccharomyces cerevisiae: Then and now.</title>
        <authorList>
            <person name="Engel S.R."/>
            <person name="Dietrich F.S."/>
            <person name="Fisk D.G."/>
            <person name="Binkley G."/>
            <person name="Balakrishnan R."/>
            <person name="Costanzo M.C."/>
            <person name="Dwight S.S."/>
            <person name="Hitz B.C."/>
            <person name="Karra K."/>
            <person name="Nash R.S."/>
            <person name="Weng S."/>
            <person name="Wong E.D."/>
            <person name="Lloyd P."/>
            <person name="Skrzypek M.S."/>
            <person name="Miyasato S.R."/>
            <person name="Simison M."/>
            <person name="Cherry J.M."/>
        </authorList>
    </citation>
    <scope>GENOME REANNOTATION</scope>
    <source>
        <strain>ATCC 204508 / S288c</strain>
    </source>
</reference>
<reference key="3">
    <citation type="journal article" date="1998" name="Mol. Microbiol.">
        <title>Schizosaccharomyces pombe isp4 encodes a transporter representing a novel family of oligopeptide transporters.</title>
        <authorList>
            <person name="Lubkowitz M.A."/>
            <person name="Barnes D."/>
            <person name="Breslav M."/>
            <person name="Burchfield A."/>
            <person name="Naider F."/>
            <person name="Becker J.M."/>
        </authorList>
    </citation>
    <scope>FUNCTION</scope>
</reference>
<reference key="4">
    <citation type="journal article" date="2000" name="J. Biol. Chem.">
        <title>Hgt1p, a high affinity glutathione transporter from the yeast Saccharomyces cerevisiae.</title>
        <authorList>
            <person name="Bourbouloux A."/>
            <person name="Shahi P."/>
            <person name="Chakladar A."/>
            <person name="Delrot S."/>
            <person name="Bachhawat A.K."/>
        </authorList>
    </citation>
    <scope>FUNCTION</scope>
</reference>
<reference key="5">
    <citation type="journal article" date="2006" name="Proc. Natl. Acad. Sci. U.S.A.">
        <title>A global topology map of the Saccharomyces cerevisiae membrane proteome.</title>
        <authorList>
            <person name="Kim H."/>
            <person name="Melen K."/>
            <person name="Oesterberg M."/>
            <person name="von Heijne G."/>
        </authorList>
    </citation>
    <scope>TOPOLOGY [LARGE SCALE ANALYSIS]</scope>
    <source>
        <strain>ATCC 208353 / W303-1A</strain>
    </source>
</reference>
<sequence length="877" mass="101261">MSETVKDKVIIDEKVSTKGTVDYAEGAEYSERLSNHSSDFSQWYTDEQILHFMKKLGYENRTLYDIPEDVAYILKKMPELTLEDSFKILKDSIIYFKDDENIPHDQYEEWKRLVDLEDLDSKEGIDEYDSFDIRAFASAIKFHSPYQEVRAVVDPEDDPTIPVETFRAYFLAIIWSVIGSGFNEFFSHRVVSISLNTPIIQMFLYICGKAWAKTIPCWTITIRGRKYGINIDKPWTQKEQMFSTLLYAICQGAFYTHYNILTQKLFYHSAFSFGYQFLLSLSVQFIGFGFAGILRKFVVYPARALWPTVMPTIAINKALLGKEKHESGMSRYKFFFLTFFIMFIYNWFPTYIINILNTFNWMTWIKPSNINLANITGGVTGLGINPISSFDWNVISFNSPLVYPFWSYLTQYLGCILAALIVIAVYYSNYMSCQYLPIFTNSLYTNTGHSFKVTEVLDSDNKLDVKKYQSYSPPYYSAGNLVSYGAFICAYPLMITWSFIVHSKLLFNAFKDWALNLWAMRKLKSWVTMFKSDYRALDDYDDPHSNAMKNYKEVPDWWYFAILIGSLVVGIAVVEHYPTNTPVWGLFVCLGFNFVFLIPTTILQATTGYSFGLNLLIEMVMGYALPGNPIAIMILKAFGYNIDGQADNYVSNLKIAHYCKIPPMALFRGQCVIVFIQIFVNLGVLNWQISNIKDFCTPHQNAKFTCPDAVTYYNASVVWGAIGPKRIFNYIYPIFKWCWLIGACIGIFFGVWKRWGKFYPRYFDPMLFVGGMLNMSPPYNLMYYTSGMIVSYISQYYMKRHHLNLWEKYNYVLSAGFSTGLVLSAIIIFFAVQYKDTAFNWWGNTVPYAGADGVGYPLKNITDTANGYFGYAPGHYP</sequence>
<dbReference type="EMBL" id="U25841">
    <property type="protein sequence ID" value="AAB64623.1"/>
    <property type="molecule type" value="Genomic_DNA"/>
</dbReference>
<dbReference type="EMBL" id="BK006949">
    <property type="protein sequence ID" value="DAA11610.1"/>
    <property type="molecule type" value="Genomic_DNA"/>
</dbReference>
<dbReference type="PIR" id="S58824">
    <property type="entry name" value="S58824"/>
</dbReference>
<dbReference type="RefSeq" id="NP_015520.1">
    <property type="nucleotide sequence ID" value="NM_001184291.1"/>
</dbReference>
<dbReference type="BioGRID" id="36366">
    <property type="interactions" value="108"/>
</dbReference>
<dbReference type="DIP" id="DIP-5482N"/>
<dbReference type="FunCoup" id="Q06593">
    <property type="interactions" value="64"/>
</dbReference>
<dbReference type="IntAct" id="Q06593">
    <property type="interactions" value="2"/>
</dbReference>
<dbReference type="STRING" id="4932.YPR194C"/>
<dbReference type="TCDB" id="2.A.67.1.4">
    <property type="family name" value="the oligopeptide transporter (opt) family"/>
</dbReference>
<dbReference type="GlyCosmos" id="Q06593">
    <property type="glycosylation" value="2 sites, No reported glycans"/>
</dbReference>
<dbReference type="GlyGen" id="Q06593">
    <property type="glycosylation" value="2 sites"/>
</dbReference>
<dbReference type="PaxDb" id="4932-YPR194C"/>
<dbReference type="PeptideAtlas" id="Q06593"/>
<dbReference type="EnsemblFungi" id="YPR194C_mRNA">
    <property type="protein sequence ID" value="YPR194C"/>
    <property type="gene ID" value="YPR194C"/>
</dbReference>
<dbReference type="GeneID" id="856324"/>
<dbReference type="KEGG" id="sce:YPR194C"/>
<dbReference type="AGR" id="SGD:S000006398"/>
<dbReference type="SGD" id="S000006398">
    <property type="gene designation" value="OPT2"/>
</dbReference>
<dbReference type="VEuPathDB" id="FungiDB:YPR194C"/>
<dbReference type="eggNOG" id="KOG2262">
    <property type="taxonomic scope" value="Eukaryota"/>
</dbReference>
<dbReference type="GeneTree" id="ENSGT00940000176656"/>
<dbReference type="HOGENOM" id="CLU_004965_1_0_1"/>
<dbReference type="InParanoid" id="Q06593"/>
<dbReference type="OMA" id="WTITIRG"/>
<dbReference type="OrthoDB" id="9986677at2759"/>
<dbReference type="BioCyc" id="YEAST:G3O-34316-MONOMER"/>
<dbReference type="BioGRID-ORCS" id="856324">
    <property type="hits" value="0 hits in 10 CRISPR screens"/>
</dbReference>
<dbReference type="PRO" id="PR:Q06593"/>
<dbReference type="Proteomes" id="UP000002311">
    <property type="component" value="Chromosome XVI"/>
</dbReference>
<dbReference type="RNAct" id="Q06593">
    <property type="molecule type" value="protein"/>
</dbReference>
<dbReference type="GO" id="GO:0000324">
    <property type="term" value="C:fungal-type vacuole"/>
    <property type="evidence" value="ECO:0007005"/>
    <property type="project" value="SGD"/>
</dbReference>
<dbReference type="GO" id="GO:0000138">
    <property type="term" value="C:Golgi trans cisterna"/>
    <property type="evidence" value="ECO:0000314"/>
    <property type="project" value="SGD"/>
</dbReference>
<dbReference type="GO" id="GO:0005777">
    <property type="term" value="C:peroxisome"/>
    <property type="evidence" value="ECO:0000314"/>
    <property type="project" value="SGD"/>
</dbReference>
<dbReference type="GO" id="GO:0005886">
    <property type="term" value="C:plasma membrane"/>
    <property type="evidence" value="ECO:0000314"/>
    <property type="project" value="SGD"/>
</dbReference>
<dbReference type="GO" id="GO:0035673">
    <property type="term" value="F:oligopeptide transmembrane transporter activity"/>
    <property type="evidence" value="ECO:0000314"/>
    <property type="project" value="SGD"/>
</dbReference>
<dbReference type="GO" id="GO:0045454">
    <property type="term" value="P:cell redox homeostasis"/>
    <property type="evidence" value="ECO:0000315"/>
    <property type="project" value="SGD"/>
</dbReference>
<dbReference type="GO" id="GO:0006857">
    <property type="term" value="P:oligopeptide transport"/>
    <property type="evidence" value="ECO:0000314"/>
    <property type="project" value="SGD"/>
</dbReference>
<dbReference type="GO" id="GO:0051515">
    <property type="term" value="P:positive regulation of monopolar cell growth"/>
    <property type="evidence" value="ECO:0000315"/>
    <property type="project" value="SGD"/>
</dbReference>
<dbReference type="GO" id="GO:0015031">
    <property type="term" value="P:protein transport"/>
    <property type="evidence" value="ECO:0007669"/>
    <property type="project" value="UniProtKB-KW"/>
</dbReference>
<dbReference type="GO" id="GO:0061091">
    <property type="term" value="P:regulation of phospholipid translocation"/>
    <property type="evidence" value="ECO:0000316"/>
    <property type="project" value="SGD"/>
</dbReference>
<dbReference type="GO" id="GO:0044088">
    <property type="term" value="P:regulation of vacuole organization"/>
    <property type="evidence" value="ECO:0000316"/>
    <property type="project" value="SGD"/>
</dbReference>
<dbReference type="GO" id="GO:0042144">
    <property type="term" value="P:vacuole fusion, non-autophagic"/>
    <property type="evidence" value="ECO:0000315"/>
    <property type="project" value="SGD"/>
</dbReference>
<dbReference type="InterPro" id="IPR004648">
    <property type="entry name" value="Oligpept_transpt"/>
</dbReference>
<dbReference type="InterPro" id="IPR004813">
    <property type="entry name" value="OPT"/>
</dbReference>
<dbReference type="NCBIfam" id="TIGR00727">
    <property type="entry name" value="ISP4_OPT"/>
    <property type="match status" value="1"/>
</dbReference>
<dbReference type="NCBIfam" id="TIGR00728">
    <property type="entry name" value="OPT_sfam"/>
    <property type="match status" value="1"/>
</dbReference>
<dbReference type="PANTHER" id="PTHR22601">
    <property type="entry name" value="ISP4 LIKE PROTEIN"/>
    <property type="match status" value="1"/>
</dbReference>
<dbReference type="Pfam" id="PF03169">
    <property type="entry name" value="OPT"/>
    <property type="match status" value="1"/>
</dbReference>
<keyword id="KW-0325">Glycoprotein</keyword>
<keyword id="KW-0472">Membrane</keyword>
<keyword id="KW-0571">Peptide transport</keyword>
<keyword id="KW-0653">Protein transport</keyword>
<keyword id="KW-1185">Reference proteome</keyword>
<keyword id="KW-0812">Transmembrane</keyword>
<keyword id="KW-1133">Transmembrane helix</keyword>
<keyword id="KW-0813">Transport</keyword>